<feature type="chain" id="PRO_0000212746" description="Probable disease resistance protein At1g62630">
    <location>
        <begin position="1"/>
        <end position="893"/>
    </location>
</feature>
<feature type="domain" description="NB-ARC">
    <location>
        <begin position="136"/>
        <end position="440"/>
    </location>
</feature>
<feature type="repeat" description="LRR 1">
    <location>
        <begin position="516"/>
        <end position="537"/>
    </location>
</feature>
<feature type="repeat" description="LRR 2">
    <location>
        <begin position="538"/>
        <end position="559"/>
    </location>
</feature>
<feature type="repeat" description="LRR 3">
    <location>
        <begin position="571"/>
        <end position="593"/>
    </location>
</feature>
<feature type="repeat" description="LRR 4">
    <location>
        <begin position="595"/>
        <end position="617"/>
    </location>
</feature>
<feature type="repeat" description="LRR 5">
    <location>
        <begin position="618"/>
        <end position="640"/>
    </location>
</feature>
<feature type="repeat" description="LRR 6">
    <location>
        <begin position="641"/>
        <end position="663"/>
    </location>
</feature>
<feature type="coiled-coil region" evidence="2">
    <location>
        <begin position="24"/>
        <end position="68"/>
    </location>
</feature>
<feature type="binding site" evidence="2">
    <location>
        <begin position="179"/>
        <end position="186"/>
    </location>
    <ligand>
        <name>ATP</name>
        <dbReference type="ChEBI" id="CHEBI:30616"/>
    </ligand>
</feature>
<feature type="sequence conflict" description="In Ref. 3; AAC50028." evidence="3" ref="3">
    <original>W</original>
    <variation>R</variation>
    <location>
        <position position="208"/>
    </location>
</feature>
<feature type="sequence conflict" description="In Ref. 3; AAC50028." evidence="3" ref="3">
    <original>L</original>
    <variation>I</variation>
    <location>
        <position position="336"/>
    </location>
</feature>
<feature type="sequence conflict" description="In Ref. 3." evidence="3" ref="3">
    <original>L</original>
    <variation>F</variation>
    <location>
        <position position="347"/>
    </location>
</feature>
<feature type="sequence conflict" description="In Ref. 1; AAF19533." evidence="3" ref="1">
    <original>R</original>
    <variation>C</variation>
    <location>
        <position position="500"/>
    </location>
</feature>
<evidence type="ECO:0000250" key="1"/>
<evidence type="ECO:0000255" key="2"/>
<evidence type="ECO:0000305" key="3"/>
<keyword id="KW-0067">ATP-binding</keyword>
<keyword id="KW-0175">Coiled coil</keyword>
<keyword id="KW-0433">Leucine-rich repeat</keyword>
<keyword id="KW-0547">Nucleotide-binding</keyword>
<keyword id="KW-0611">Plant defense</keyword>
<keyword id="KW-1185">Reference proteome</keyword>
<keyword id="KW-0677">Repeat</keyword>
<reference key="1">
    <citation type="journal article" date="2000" name="Nature">
        <title>Sequence and analysis of chromosome 1 of the plant Arabidopsis thaliana.</title>
        <authorList>
            <person name="Theologis A."/>
            <person name="Ecker J.R."/>
            <person name="Palm C.J."/>
            <person name="Federspiel N.A."/>
            <person name="Kaul S."/>
            <person name="White O."/>
            <person name="Alonso J."/>
            <person name="Altafi H."/>
            <person name="Araujo R."/>
            <person name="Bowman C.L."/>
            <person name="Brooks S.Y."/>
            <person name="Buehler E."/>
            <person name="Chan A."/>
            <person name="Chao Q."/>
            <person name="Chen H."/>
            <person name="Cheuk R.F."/>
            <person name="Chin C.W."/>
            <person name="Chung M.K."/>
            <person name="Conn L."/>
            <person name="Conway A.B."/>
            <person name="Conway A.R."/>
            <person name="Creasy T.H."/>
            <person name="Dewar K."/>
            <person name="Dunn P."/>
            <person name="Etgu P."/>
            <person name="Feldblyum T.V."/>
            <person name="Feng J.-D."/>
            <person name="Fong B."/>
            <person name="Fujii C.Y."/>
            <person name="Gill J.E."/>
            <person name="Goldsmith A.D."/>
            <person name="Haas B."/>
            <person name="Hansen N.F."/>
            <person name="Hughes B."/>
            <person name="Huizar L."/>
            <person name="Hunter J.L."/>
            <person name="Jenkins J."/>
            <person name="Johnson-Hopson C."/>
            <person name="Khan S."/>
            <person name="Khaykin E."/>
            <person name="Kim C.J."/>
            <person name="Koo H.L."/>
            <person name="Kremenetskaia I."/>
            <person name="Kurtz D.B."/>
            <person name="Kwan A."/>
            <person name="Lam B."/>
            <person name="Langin-Hooper S."/>
            <person name="Lee A."/>
            <person name="Lee J.M."/>
            <person name="Lenz C.A."/>
            <person name="Li J.H."/>
            <person name="Li Y.-P."/>
            <person name="Lin X."/>
            <person name="Liu S.X."/>
            <person name="Liu Z.A."/>
            <person name="Luros J.S."/>
            <person name="Maiti R."/>
            <person name="Marziali A."/>
            <person name="Militscher J."/>
            <person name="Miranda M."/>
            <person name="Nguyen M."/>
            <person name="Nierman W.C."/>
            <person name="Osborne B.I."/>
            <person name="Pai G."/>
            <person name="Peterson J."/>
            <person name="Pham P.K."/>
            <person name="Rizzo M."/>
            <person name="Rooney T."/>
            <person name="Rowley D."/>
            <person name="Sakano H."/>
            <person name="Salzberg S.L."/>
            <person name="Schwartz J.R."/>
            <person name="Shinn P."/>
            <person name="Southwick A.M."/>
            <person name="Sun H."/>
            <person name="Tallon L.J."/>
            <person name="Tambunga G."/>
            <person name="Toriumi M.J."/>
            <person name="Town C.D."/>
            <person name="Utterback T."/>
            <person name="Van Aken S."/>
            <person name="Vaysberg M."/>
            <person name="Vysotskaia V.S."/>
            <person name="Walker M."/>
            <person name="Wu D."/>
            <person name="Yu G."/>
            <person name="Fraser C.M."/>
            <person name="Venter J.C."/>
            <person name="Davis R.W."/>
        </authorList>
    </citation>
    <scope>NUCLEOTIDE SEQUENCE [LARGE SCALE GENOMIC DNA]</scope>
    <source>
        <strain>cv. Columbia</strain>
    </source>
</reference>
<reference key="2">
    <citation type="journal article" date="2017" name="Plant J.">
        <title>Araport11: a complete reannotation of the Arabidopsis thaliana reference genome.</title>
        <authorList>
            <person name="Cheng C.Y."/>
            <person name="Krishnakumar V."/>
            <person name="Chan A.P."/>
            <person name="Thibaud-Nissen F."/>
            <person name="Schobel S."/>
            <person name="Town C.D."/>
        </authorList>
    </citation>
    <scope>GENOME REANNOTATION</scope>
    <source>
        <strain>cv. Columbia</strain>
    </source>
</reference>
<reference key="3">
    <citation type="journal article" date="1998" name="Plant J.">
        <title>Disease resistance gene homologs correlate with disease resistance loci of Arabidopsis thaliana.</title>
        <authorList>
            <person name="Speulman E."/>
            <person name="Bouchez D."/>
            <person name="Holub E.B."/>
            <person name="Beynon J.L."/>
        </authorList>
    </citation>
    <scope>NUCLEOTIDE SEQUENCE [GENOMIC DNA] OF 181-351</scope>
    <source>
        <strain>cv. Nd-1</strain>
    </source>
</reference>
<gene>
    <name type="ordered locus">At1g62630</name>
    <name type="ORF">F23N19.1</name>
    <name type="ORF">T3P18.19</name>
</gene>
<name>DRL14_ARATH</name>
<accession>Q9SI85</accession>
<accession>O82099</accession>
<accession>Q9SXD4</accession>
<sequence length="893" mass="101905">MGISFSIPFDPCVNKVSQWLDMKGSYTHNLEKNLVALETTMEELKAKRDDLLRRLKREEDRGLQRLSEFQVWLNRVATVEDIIITLLRDRDVEIQRLCLCRFCSKNLTTSYRYGKSVFLRLREVEKLKGEVFGVITEQASTSAFEERPLQPTIVGQKKMLDKAWKHLMEDGTGIMGMYGMGGVGKTTLLTQLFNMFNKDKCGFDIGIWVVVSQEVNVEKIQDEIAQKLGLGGHEWTQRDISQKGVHLFNFLKNKKFVLFLDDLWDKVELANIGVPDPRTQKGCKLAFTSRSLNVCTSMGDEEPMEVQCLEENVAFDLFQKKVGQKTLGSDPGIPQLARIVAKKCCGLPLALNVIGETMSCKRTIQEWRNAIHVLNSYAAEFIGMEDKILPLLKYSYDNLKGEHVKSSLLYCALYPEDAKIRKEDLIEHWICEEIIDGSEGIEKAEDKGYDIIGSLVRASLLMECVDLKGKSSVIMHDVVREMALWIASELGIQKEAFIVRAGVGVREIPKVKNWNVVRRMSLMGNKIHHLVGSYECMELTTLLLGEGEYGSIWRWSEIKTISSEFFNCMPKLAVLDLSHNQSLFELPEEISNLVSLKYLNLSHTGIRHLSKGIQELKKIIHLNLEHTSKLESIDGISSLHNLKVLKLYGSRLPWDLNTVKELETLEHLEILTTTIDPRAKQFLSSHRLMSRSRLLQIFGSNIFSPDRQLESLSVSTDKLREFEIMCCSISEIKMGGICNFLSLVDVTIYNCEGLRELTFLIFAPKLRSLSVVDAKDLEDIINEEKACEGEDSGIVPFPELKYLNLDDLPKLKNIYRRPLPFLCLEKITIGECPNLRKLPLDSRSGKQGENGCIIHYKDSRWLKGVKWADEATKKRFLPSCEHRLERCETIFED</sequence>
<protein>
    <recommendedName>
        <fullName>Probable disease resistance protein At1g62630</fullName>
    </recommendedName>
    <alternativeName>
        <fullName>pNd4</fullName>
    </alternativeName>
</protein>
<organism>
    <name type="scientific">Arabidopsis thaliana</name>
    <name type="common">Mouse-ear cress</name>
    <dbReference type="NCBI Taxonomy" id="3702"/>
    <lineage>
        <taxon>Eukaryota</taxon>
        <taxon>Viridiplantae</taxon>
        <taxon>Streptophyta</taxon>
        <taxon>Embryophyta</taxon>
        <taxon>Tracheophyta</taxon>
        <taxon>Spermatophyta</taxon>
        <taxon>Magnoliopsida</taxon>
        <taxon>eudicotyledons</taxon>
        <taxon>Gunneridae</taxon>
        <taxon>Pentapetalae</taxon>
        <taxon>rosids</taxon>
        <taxon>malvids</taxon>
        <taxon>Brassicales</taxon>
        <taxon>Brassicaceae</taxon>
        <taxon>Camelineae</taxon>
        <taxon>Arabidopsis</taxon>
    </lineage>
</organism>
<proteinExistence type="inferred from homology"/>
<dbReference type="EMBL" id="AC005698">
    <property type="protein sequence ID" value="AAD43620.1"/>
    <property type="molecule type" value="Genomic_DNA"/>
</dbReference>
<dbReference type="EMBL" id="AC007190">
    <property type="protein sequence ID" value="AAF19533.1"/>
    <property type="status" value="ALT_SEQ"/>
    <property type="molecule type" value="Genomic_DNA"/>
</dbReference>
<dbReference type="EMBL" id="CP002684">
    <property type="protein sequence ID" value="AEE33988.1"/>
    <property type="molecule type" value="Genomic_DNA"/>
</dbReference>
<dbReference type="EMBL" id="U97220">
    <property type="protein sequence ID" value="AAC50028.1"/>
    <property type="molecule type" value="Genomic_DNA"/>
</dbReference>
<dbReference type="PIR" id="H96651">
    <property type="entry name" value="H96651"/>
</dbReference>
<dbReference type="RefSeq" id="NP_176451.1">
    <property type="nucleotide sequence ID" value="NM_104941.2"/>
</dbReference>
<dbReference type="SMR" id="Q9SI85"/>
<dbReference type="FunCoup" id="Q9SI85">
    <property type="interactions" value="54"/>
</dbReference>
<dbReference type="STRING" id="3702.Q9SI85"/>
<dbReference type="iPTMnet" id="Q9SI85"/>
<dbReference type="PaxDb" id="3702-AT1G62630.1"/>
<dbReference type="ProteomicsDB" id="224311"/>
<dbReference type="EnsemblPlants" id="AT1G62630.1">
    <property type="protein sequence ID" value="AT1G62630.1"/>
    <property type="gene ID" value="AT1G62630"/>
</dbReference>
<dbReference type="GeneID" id="842560"/>
<dbReference type="Gramene" id="AT1G62630.1">
    <property type="protein sequence ID" value="AT1G62630.1"/>
    <property type="gene ID" value="AT1G62630"/>
</dbReference>
<dbReference type="KEGG" id="ath:AT1G62630"/>
<dbReference type="Araport" id="AT1G62630"/>
<dbReference type="TAIR" id="AT1G62630"/>
<dbReference type="eggNOG" id="KOG4658">
    <property type="taxonomic scope" value="Eukaryota"/>
</dbReference>
<dbReference type="HOGENOM" id="CLU_000427_4_0_1"/>
<dbReference type="InParanoid" id="Q9SI85"/>
<dbReference type="OMA" id="MGTICLE"/>
<dbReference type="PhylomeDB" id="Q9SI85"/>
<dbReference type="PRO" id="PR:Q9SI85"/>
<dbReference type="Proteomes" id="UP000006548">
    <property type="component" value="Chromosome 1"/>
</dbReference>
<dbReference type="ExpressionAtlas" id="Q9SI85">
    <property type="expression patterns" value="baseline and differential"/>
</dbReference>
<dbReference type="GO" id="GO:0005634">
    <property type="term" value="C:nucleus"/>
    <property type="evidence" value="ECO:0007005"/>
    <property type="project" value="TAIR"/>
</dbReference>
<dbReference type="GO" id="GO:0043531">
    <property type="term" value="F:ADP binding"/>
    <property type="evidence" value="ECO:0007669"/>
    <property type="project" value="InterPro"/>
</dbReference>
<dbReference type="GO" id="GO:0005524">
    <property type="term" value="F:ATP binding"/>
    <property type="evidence" value="ECO:0007669"/>
    <property type="project" value="UniProtKB-KW"/>
</dbReference>
<dbReference type="GO" id="GO:0006952">
    <property type="term" value="P:defense response"/>
    <property type="evidence" value="ECO:0007669"/>
    <property type="project" value="UniProtKB-KW"/>
</dbReference>
<dbReference type="FunFam" id="3.80.10.10:FF:000861">
    <property type="entry name" value="Disease resistance protein (CC-NBS-LRR class) family"/>
    <property type="match status" value="1"/>
</dbReference>
<dbReference type="FunFam" id="3.40.50.300:FF:001091">
    <property type="entry name" value="Probable disease resistance protein At1g61300"/>
    <property type="match status" value="1"/>
</dbReference>
<dbReference type="FunFam" id="1.10.10.10:FF:000322">
    <property type="entry name" value="Probable disease resistance protein At1g63360"/>
    <property type="match status" value="1"/>
</dbReference>
<dbReference type="FunFam" id="3.80.10.10:FF:000799">
    <property type="entry name" value="Probable disease resistance protein At5g63020"/>
    <property type="match status" value="1"/>
</dbReference>
<dbReference type="FunFam" id="1.10.8.430:FF:000003">
    <property type="entry name" value="Probable disease resistance protein At5g66910"/>
    <property type="match status" value="1"/>
</dbReference>
<dbReference type="Gene3D" id="1.10.8.430">
    <property type="entry name" value="Helical domain of apoptotic protease-activating factors"/>
    <property type="match status" value="1"/>
</dbReference>
<dbReference type="Gene3D" id="3.40.50.300">
    <property type="entry name" value="P-loop containing nucleotide triphosphate hydrolases"/>
    <property type="match status" value="1"/>
</dbReference>
<dbReference type="Gene3D" id="3.80.10.10">
    <property type="entry name" value="Ribonuclease Inhibitor"/>
    <property type="match status" value="2"/>
</dbReference>
<dbReference type="Gene3D" id="1.10.10.10">
    <property type="entry name" value="Winged helix-like DNA-binding domain superfamily/Winged helix DNA-binding domain"/>
    <property type="match status" value="1"/>
</dbReference>
<dbReference type="InterPro" id="IPR042197">
    <property type="entry name" value="Apaf_helical"/>
</dbReference>
<dbReference type="InterPro" id="IPR032675">
    <property type="entry name" value="LRR_dom_sf"/>
</dbReference>
<dbReference type="InterPro" id="IPR055414">
    <property type="entry name" value="LRR_R13L4/SHOC2-like"/>
</dbReference>
<dbReference type="InterPro" id="IPR002182">
    <property type="entry name" value="NB-ARC"/>
</dbReference>
<dbReference type="InterPro" id="IPR027417">
    <property type="entry name" value="P-loop_NTPase"/>
</dbReference>
<dbReference type="InterPro" id="IPR050905">
    <property type="entry name" value="Plant_NBS-LRR"/>
</dbReference>
<dbReference type="InterPro" id="IPR036388">
    <property type="entry name" value="WH-like_DNA-bd_sf"/>
</dbReference>
<dbReference type="PANTHER" id="PTHR33463:SF210">
    <property type="entry name" value="NB-ARC DOMAIN-CONTAINING PROTEIN"/>
    <property type="match status" value="1"/>
</dbReference>
<dbReference type="PANTHER" id="PTHR33463">
    <property type="entry name" value="NB-ARC DOMAIN-CONTAINING PROTEIN-RELATED"/>
    <property type="match status" value="1"/>
</dbReference>
<dbReference type="Pfam" id="PF23598">
    <property type="entry name" value="LRR_14"/>
    <property type="match status" value="1"/>
</dbReference>
<dbReference type="Pfam" id="PF00931">
    <property type="entry name" value="NB-ARC"/>
    <property type="match status" value="1"/>
</dbReference>
<dbReference type="Pfam" id="PF23559">
    <property type="entry name" value="WH_DRP"/>
    <property type="match status" value="1"/>
</dbReference>
<dbReference type="PRINTS" id="PR00364">
    <property type="entry name" value="DISEASERSIST"/>
</dbReference>
<dbReference type="SUPFAM" id="SSF52058">
    <property type="entry name" value="L domain-like"/>
    <property type="match status" value="1"/>
</dbReference>
<dbReference type="SUPFAM" id="SSF52540">
    <property type="entry name" value="P-loop containing nucleoside triphosphate hydrolases"/>
    <property type="match status" value="1"/>
</dbReference>
<comment type="function">
    <text evidence="1">Probable disease resistance protein.</text>
</comment>
<comment type="domain">
    <text evidence="1">The LRR repeats probably act as specificity determinant of pathogen recognition.</text>
</comment>
<comment type="similarity">
    <text evidence="3">Belongs to the disease resistance NB-LRR family.</text>
</comment>
<comment type="sequence caution" evidence="3">
    <conflict type="erroneous gene model prediction">
        <sequence resource="EMBL-CDS" id="AAF19533"/>
    </conflict>
</comment>
<comment type="online information" name="NIB-LRRS">
    <link uri="http://niblrrs.ucdavis.edu"/>
    <text>Functional and comparative genomics of disease resistance gene homologs</text>
</comment>